<reference key="1">
    <citation type="journal article" date="2010" name="J. Bacteriol.">
        <title>Genome sequence of the deep-rooted Yersinia pestis strain Angola reveals new insights into the evolution and pangenome of the plague bacterium.</title>
        <authorList>
            <person name="Eppinger M."/>
            <person name="Worsham P.L."/>
            <person name="Nikolich M.P."/>
            <person name="Riley D.R."/>
            <person name="Sebastian Y."/>
            <person name="Mou S."/>
            <person name="Achtman M."/>
            <person name="Lindler L.E."/>
            <person name="Ravel J."/>
        </authorList>
    </citation>
    <scope>NUCLEOTIDE SEQUENCE [LARGE SCALE GENOMIC DNA]</scope>
    <source>
        <strain>Angola</strain>
    </source>
</reference>
<proteinExistence type="inferred from homology"/>
<accession>A9R0Q4</accession>
<comment type="function">
    <text evidence="1">May play a role in DNA repair. It seems to be involved in an RecBC-independent recombinational process of DNA repair. It may act with RecF and RecO.</text>
</comment>
<comment type="similarity">
    <text evidence="1">Belongs to the RecR family.</text>
</comment>
<name>RECR_YERPG</name>
<sequence>MQTSPLLESLMEALRCLPGVGPKSAQRMAFQLLQRDRSGGMRLAQALTRAMSEIGHCADCRTFTEQEHCTICLNPRRQQNGQICVVESPADIHAIEQTGQFGGRYFVLMGHLSPMDGIGPGDIGLDLLEKRLSTEAISEVILATNPTVEGDATANYIGQMCGQYGILASRIAHGVPVGGELEMVDGTTLSHSLAGRNPIKY</sequence>
<evidence type="ECO:0000255" key="1">
    <source>
        <dbReference type="HAMAP-Rule" id="MF_00017"/>
    </source>
</evidence>
<organism>
    <name type="scientific">Yersinia pestis bv. Antiqua (strain Angola)</name>
    <dbReference type="NCBI Taxonomy" id="349746"/>
    <lineage>
        <taxon>Bacteria</taxon>
        <taxon>Pseudomonadati</taxon>
        <taxon>Pseudomonadota</taxon>
        <taxon>Gammaproteobacteria</taxon>
        <taxon>Enterobacterales</taxon>
        <taxon>Yersiniaceae</taxon>
        <taxon>Yersinia</taxon>
    </lineage>
</organism>
<dbReference type="EMBL" id="CP000901">
    <property type="protein sequence ID" value="ABX85075.1"/>
    <property type="molecule type" value="Genomic_DNA"/>
</dbReference>
<dbReference type="RefSeq" id="WP_002208603.1">
    <property type="nucleotide sequence ID" value="NZ_CP009935.1"/>
</dbReference>
<dbReference type="SMR" id="A9R0Q4"/>
<dbReference type="GeneID" id="57975591"/>
<dbReference type="KEGG" id="ypg:YpAngola_A2891"/>
<dbReference type="GO" id="GO:0003677">
    <property type="term" value="F:DNA binding"/>
    <property type="evidence" value="ECO:0007669"/>
    <property type="project" value="UniProtKB-UniRule"/>
</dbReference>
<dbReference type="GO" id="GO:0008270">
    <property type="term" value="F:zinc ion binding"/>
    <property type="evidence" value="ECO:0007669"/>
    <property type="project" value="UniProtKB-KW"/>
</dbReference>
<dbReference type="GO" id="GO:0006310">
    <property type="term" value="P:DNA recombination"/>
    <property type="evidence" value="ECO:0007669"/>
    <property type="project" value="UniProtKB-UniRule"/>
</dbReference>
<dbReference type="GO" id="GO:0006281">
    <property type="term" value="P:DNA repair"/>
    <property type="evidence" value="ECO:0007669"/>
    <property type="project" value="UniProtKB-UniRule"/>
</dbReference>
<dbReference type="CDD" id="cd01025">
    <property type="entry name" value="TOPRIM_recR"/>
    <property type="match status" value="1"/>
</dbReference>
<dbReference type="FunFam" id="1.10.8.420:FF:000001">
    <property type="entry name" value="Recombination protein RecR"/>
    <property type="match status" value="1"/>
</dbReference>
<dbReference type="FunFam" id="3.40.1360.10:FF:000001">
    <property type="entry name" value="Recombination protein RecR"/>
    <property type="match status" value="1"/>
</dbReference>
<dbReference type="Gene3D" id="3.40.1360.10">
    <property type="match status" value="1"/>
</dbReference>
<dbReference type="Gene3D" id="6.10.250.240">
    <property type="match status" value="1"/>
</dbReference>
<dbReference type="Gene3D" id="1.10.8.420">
    <property type="entry name" value="RecR Domain 1"/>
    <property type="match status" value="1"/>
</dbReference>
<dbReference type="HAMAP" id="MF_00017">
    <property type="entry name" value="RecR"/>
    <property type="match status" value="1"/>
</dbReference>
<dbReference type="InterPro" id="IPR000093">
    <property type="entry name" value="DNA_Rcmb_RecR"/>
</dbReference>
<dbReference type="InterPro" id="IPR023627">
    <property type="entry name" value="Rcmb_RecR"/>
</dbReference>
<dbReference type="InterPro" id="IPR015967">
    <property type="entry name" value="Rcmb_RecR_Znf"/>
</dbReference>
<dbReference type="InterPro" id="IPR006171">
    <property type="entry name" value="TOPRIM_dom"/>
</dbReference>
<dbReference type="InterPro" id="IPR034137">
    <property type="entry name" value="TOPRIM_RecR"/>
</dbReference>
<dbReference type="NCBIfam" id="TIGR00615">
    <property type="entry name" value="recR"/>
    <property type="match status" value="1"/>
</dbReference>
<dbReference type="PANTHER" id="PTHR30446">
    <property type="entry name" value="RECOMBINATION PROTEIN RECR"/>
    <property type="match status" value="1"/>
</dbReference>
<dbReference type="PANTHER" id="PTHR30446:SF0">
    <property type="entry name" value="RECOMBINATION PROTEIN RECR"/>
    <property type="match status" value="1"/>
</dbReference>
<dbReference type="Pfam" id="PF21175">
    <property type="entry name" value="RecR_C"/>
    <property type="match status" value="1"/>
</dbReference>
<dbReference type="Pfam" id="PF21176">
    <property type="entry name" value="RecR_HhH"/>
    <property type="match status" value="1"/>
</dbReference>
<dbReference type="Pfam" id="PF02132">
    <property type="entry name" value="RecR_ZnF"/>
    <property type="match status" value="1"/>
</dbReference>
<dbReference type="Pfam" id="PF13662">
    <property type="entry name" value="Toprim_4"/>
    <property type="match status" value="1"/>
</dbReference>
<dbReference type="SMART" id="SM00493">
    <property type="entry name" value="TOPRIM"/>
    <property type="match status" value="1"/>
</dbReference>
<dbReference type="SUPFAM" id="SSF111304">
    <property type="entry name" value="Recombination protein RecR"/>
    <property type="match status" value="1"/>
</dbReference>
<dbReference type="PROSITE" id="PS01300">
    <property type="entry name" value="RECR"/>
    <property type="match status" value="1"/>
</dbReference>
<dbReference type="PROSITE" id="PS50880">
    <property type="entry name" value="TOPRIM"/>
    <property type="match status" value="1"/>
</dbReference>
<keyword id="KW-0227">DNA damage</keyword>
<keyword id="KW-0233">DNA recombination</keyword>
<keyword id="KW-0234">DNA repair</keyword>
<keyword id="KW-0479">Metal-binding</keyword>
<keyword id="KW-0862">Zinc</keyword>
<keyword id="KW-0863">Zinc-finger</keyword>
<feature type="chain" id="PRO_1000089782" description="Recombination protein RecR">
    <location>
        <begin position="1"/>
        <end position="201"/>
    </location>
</feature>
<feature type="domain" description="Toprim" evidence="1">
    <location>
        <begin position="81"/>
        <end position="176"/>
    </location>
</feature>
<feature type="zinc finger region" description="C4-type" evidence="1">
    <location>
        <begin position="57"/>
        <end position="72"/>
    </location>
</feature>
<protein>
    <recommendedName>
        <fullName evidence="1">Recombination protein RecR</fullName>
    </recommendedName>
</protein>
<gene>
    <name evidence="1" type="primary">recR</name>
    <name type="ordered locus">YpAngola_A2891</name>
</gene>